<name>FAL1_CRYNJ</name>
<protein>
    <recommendedName>
        <fullName>ATP-dependent RNA helicase FAL1</fullName>
        <ecNumber>3.6.4.13</ecNumber>
    </recommendedName>
</protein>
<proteinExistence type="inferred from homology"/>
<comment type="function">
    <text evidence="1">ATP-dependent RNA helicase involved in 40S ribosomal subunit biogenesis. Required for the processing and cleavage of 35S pre-rRNA at sites A0, A1, and A2, leading to mature 18S rRNA (By similarity).</text>
</comment>
<comment type="catalytic activity">
    <reaction>
        <text>ATP + H2O = ADP + phosphate + H(+)</text>
        <dbReference type="Rhea" id="RHEA:13065"/>
        <dbReference type="ChEBI" id="CHEBI:15377"/>
        <dbReference type="ChEBI" id="CHEBI:15378"/>
        <dbReference type="ChEBI" id="CHEBI:30616"/>
        <dbReference type="ChEBI" id="CHEBI:43474"/>
        <dbReference type="ChEBI" id="CHEBI:456216"/>
        <dbReference type="EC" id="3.6.4.13"/>
    </reaction>
</comment>
<comment type="subcellular location">
    <subcellularLocation>
        <location evidence="1">Nucleus</location>
        <location evidence="1">Nucleolus</location>
    </subcellularLocation>
</comment>
<comment type="domain">
    <text>The Q motif is unique to and characteristic of the DEAD box family of RNA helicases and controls ATP binding and hydrolysis.</text>
</comment>
<comment type="similarity">
    <text evidence="4">Belongs to the DEAD box helicase family. DDX48/FAL1 subfamily.</text>
</comment>
<dbReference type="EC" id="3.6.4.13"/>
<dbReference type="EMBL" id="AE017343">
    <property type="protein sequence ID" value="AAW42586.1"/>
    <property type="molecule type" value="Genomic_DNA"/>
</dbReference>
<dbReference type="RefSeq" id="XP_569893.1">
    <property type="nucleotide sequence ID" value="XM_569893.1"/>
</dbReference>
<dbReference type="SMR" id="P0CQ72"/>
<dbReference type="FunCoup" id="P0CQ72">
    <property type="interactions" value="438"/>
</dbReference>
<dbReference type="STRING" id="214684.P0CQ72"/>
<dbReference type="PaxDb" id="214684-P0CQ72"/>
<dbReference type="EnsemblFungi" id="AAW42586">
    <property type="protein sequence ID" value="AAW42586"/>
    <property type="gene ID" value="CNC06360"/>
</dbReference>
<dbReference type="GeneID" id="3256771"/>
<dbReference type="KEGG" id="cne:CNC06360"/>
<dbReference type="VEuPathDB" id="FungiDB:CNC06360"/>
<dbReference type="eggNOG" id="KOG0328">
    <property type="taxonomic scope" value="Eukaryota"/>
</dbReference>
<dbReference type="HOGENOM" id="CLU_003041_1_0_1"/>
<dbReference type="InParanoid" id="P0CQ72"/>
<dbReference type="OMA" id="TRFHDFK"/>
<dbReference type="OrthoDB" id="10265785at2759"/>
<dbReference type="Proteomes" id="UP000002149">
    <property type="component" value="Chromosome 3"/>
</dbReference>
<dbReference type="GO" id="GO:0071013">
    <property type="term" value="C:catalytic step 2 spliceosome"/>
    <property type="evidence" value="ECO:0000318"/>
    <property type="project" value="GO_Central"/>
</dbReference>
<dbReference type="GO" id="GO:0005730">
    <property type="term" value="C:nucleolus"/>
    <property type="evidence" value="ECO:0000318"/>
    <property type="project" value="GO_Central"/>
</dbReference>
<dbReference type="GO" id="GO:0005524">
    <property type="term" value="F:ATP binding"/>
    <property type="evidence" value="ECO:0007669"/>
    <property type="project" value="UniProtKB-KW"/>
</dbReference>
<dbReference type="GO" id="GO:0016887">
    <property type="term" value="F:ATP hydrolysis activity"/>
    <property type="evidence" value="ECO:0007669"/>
    <property type="project" value="RHEA"/>
</dbReference>
<dbReference type="GO" id="GO:0003729">
    <property type="term" value="F:mRNA binding"/>
    <property type="evidence" value="ECO:0000318"/>
    <property type="project" value="GO_Central"/>
</dbReference>
<dbReference type="GO" id="GO:0003724">
    <property type="term" value="F:RNA helicase activity"/>
    <property type="evidence" value="ECO:0000318"/>
    <property type="project" value="GO_Central"/>
</dbReference>
<dbReference type="GO" id="GO:0000398">
    <property type="term" value="P:mRNA splicing, via spliceosome"/>
    <property type="evidence" value="ECO:0000318"/>
    <property type="project" value="GO_Central"/>
</dbReference>
<dbReference type="GO" id="GO:0006364">
    <property type="term" value="P:rRNA processing"/>
    <property type="evidence" value="ECO:0007669"/>
    <property type="project" value="UniProtKB-KW"/>
</dbReference>
<dbReference type="CDD" id="cd18045">
    <property type="entry name" value="DEADc_EIF4AIII_DDX48"/>
    <property type="match status" value="1"/>
</dbReference>
<dbReference type="CDD" id="cd18787">
    <property type="entry name" value="SF2_C_DEAD"/>
    <property type="match status" value="1"/>
</dbReference>
<dbReference type="FunFam" id="3.40.50.300:FF:000031">
    <property type="entry name" value="Eukaryotic initiation factor 4A-III"/>
    <property type="match status" value="1"/>
</dbReference>
<dbReference type="FunFam" id="3.40.50.300:FF:000498">
    <property type="entry name" value="Eukaryotic initiation factor 4A-III"/>
    <property type="match status" value="1"/>
</dbReference>
<dbReference type="Gene3D" id="3.40.50.300">
    <property type="entry name" value="P-loop containing nucleotide triphosphate hydrolases"/>
    <property type="match status" value="2"/>
</dbReference>
<dbReference type="InterPro" id="IPR011545">
    <property type="entry name" value="DEAD/DEAH_box_helicase_dom"/>
</dbReference>
<dbReference type="InterPro" id="IPR014001">
    <property type="entry name" value="Helicase_ATP-bd"/>
</dbReference>
<dbReference type="InterPro" id="IPR001650">
    <property type="entry name" value="Helicase_C-like"/>
</dbReference>
<dbReference type="InterPro" id="IPR027417">
    <property type="entry name" value="P-loop_NTPase"/>
</dbReference>
<dbReference type="InterPro" id="IPR014014">
    <property type="entry name" value="RNA_helicase_DEAD_Q_motif"/>
</dbReference>
<dbReference type="PANTHER" id="PTHR47958">
    <property type="entry name" value="ATP-DEPENDENT RNA HELICASE DBP3"/>
    <property type="match status" value="1"/>
</dbReference>
<dbReference type="Pfam" id="PF00270">
    <property type="entry name" value="DEAD"/>
    <property type="match status" value="1"/>
</dbReference>
<dbReference type="Pfam" id="PF00271">
    <property type="entry name" value="Helicase_C"/>
    <property type="match status" value="1"/>
</dbReference>
<dbReference type="SMART" id="SM00487">
    <property type="entry name" value="DEXDc"/>
    <property type="match status" value="1"/>
</dbReference>
<dbReference type="SMART" id="SM00490">
    <property type="entry name" value="HELICc"/>
    <property type="match status" value="1"/>
</dbReference>
<dbReference type="SUPFAM" id="SSF52540">
    <property type="entry name" value="P-loop containing nucleoside triphosphate hydrolases"/>
    <property type="match status" value="2"/>
</dbReference>
<dbReference type="PROSITE" id="PS51192">
    <property type="entry name" value="HELICASE_ATP_BIND_1"/>
    <property type="match status" value="1"/>
</dbReference>
<dbReference type="PROSITE" id="PS51194">
    <property type="entry name" value="HELICASE_CTER"/>
    <property type="match status" value="1"/>
</dbReference>
<dbReference type="PROSITE" id="PS51195">
    <property type="entry name" value="Q_MOTIF"/>
    <property type="match status" value="1"/>
</dbReference>
<sequence>MAGVNVGDDKLVFESSEAVTVAPTFEALNLKEDLLRGIYAYNFEKPSAIQQRAIIPIIRGRDVIAQAQSGTGKTATFSISMLQSIDTNLRETQALVLSPTRELAVQIQTVVLALGDYMNVSCHACIGGTSVGEDIRKLEAGQQVVSGTPGRVFDMIRRRNLRTKDIKMLILDESDELLNKGFKDQIYDIYRYLPPATQVVVVSATLPHDVLEMTTKFMTDPVRILVKRDELTLEGIKQFFVAVEKEDWKFDTLCDLYDTLTITQAVIFCNTRRKVDWLTEKMREANFTVSSMHGEMVQKERDAIMAEFRGGQSRVLITTDVWARGIDVQQVSLVINYDLPTSRENYLHRIGRSGRFGRKGVAINFVTVDDVRILRDIEQYYSTQIDEMPMNVAELT</sequence>
<gene>
    <name type="primary">FAL1</name>
    <name type="ordered locus">CNC06360</name>
</gene>
<evidence type="ECO:0000250" key="1"/>
<evidence type="ECO:0000255" key="2">
    <source>
        <dbReference type="PROSITE-ProRule" id="PRU00541"/>
    </source>
</evidence>
<evidence type="ECO:0000255" key="3">
    <source>
        <dbReference type="PROSITE-ProRule" id="PRU00542"/>
    </source>
</evidence>
<evidence type="ECO:0000305" key="4"/>
<keyword id="KW-0067">ATP-binding</keyword>
<keyword id="KW-0347">Helicase</keyword>
<keyword id="KW-0378">Hydrolase</keyword>
<keyword id="KW-0547">Nucleotide-binding</keyword>
<keyword id="KW-0539">Nucleus</keyword>
<keyword id="KW-1185">Reference proteome</keyword>
<keyword id="KW-0690">Ribosome biogenesis</keyword>
<keyword id="KW-0694">RNA-binding</keyword>
<keyword id="KW-0698">rRNA processing</keyword>
<accession>P0CQ72</accession>
<accession>Q55WQ4</accession>
<accession>Q5KJJ2</accession>
<organism>
    <name type="scientific">Cryptococcus neoformans var. neoformans serotype D (strain JEC21 / ATCC MYA-565)</name>
    <name type="common">Filobasidiella neoformans</name>
    <dbReference type="NCBI Taxonomy" id="214684"/>
    <lineage>
        <taxon>Eukaryota</taxon>
        <taxon>Fungi</taxon>
        <taxon>Dikarya</taxon>
        <taxon>Basidiomycota</taxon>
        <taxon>Agaricomycotina</taxon>
        <taxon>Tremellomycetes</taxon>
        <taxon>Tremellales</taxon>
        <taxon>Cryptococcaceae</taxon>
        <taxon>Cryptococcus</taxon>
        <taxon>Cryptococcus neoformans species complex</taxon>
    </lineage>
</organism>
<feature type="chain" id="PRO_0000232145" description="ATP-dependent RNA helicase FAL1">
    <location>
        <begin position="1"/>
        <end position="396"/>
    </location>
</feature>
<feature type="domain" description="Helicase ATP-binding" evidence="2">
    <location>
        <begin position="54"/>
        <end position="224"/>
    </location>
</feature>
<feature type="domain" description="Helicase C-terminal" evidence="3">
    <location>
        <begin position="235"/>
        <end position="396"/>
    </location>
</feature>
<feature type="short sequence motif" description="Q motif">
    <location>
        <begin position="23"/>
        <end position="51"/>
    </location>
</feature>
<feature type="short sequence motif" description="DEAD box">
    <location>
        <begin position="172"/>
        <end position="175"/>
    </location>
</feature>
<feature type="binding site" evidence="2">
    <location>
        <begin position="67"/>
        <end position="74"/>
    </location>
    <ligand>
        <name>ATP</name>
        <dbReference type="ChEBI" id="CHEBI:30616"/>
    </ligand>
</feature>
<reference key="1">
    <citation type="journal article" date="2005" name="Science">
        <title>The genome of the basidiomycetous yeast and human pathogen Cryptococcus neoformans.</title>
        <authorList>
            <person name="Loftus B.J."/>
            <person name="Fung E."/>
            <person name="Roncaglia P."/>
            <person name="Rowley D."/>
            <person name="Amedeo P."/>
            <person name="Bruno D."/>
            <person name="Vamathevan J."/>
            <person name="Miranda M."/>
            <person name="Anderson I.J."/>
            <person name="Fraser J.A."/>
            <person name="Allen J.E."/>
            <person name="Bosdet I.E."/>
            <person name="Brent M.R."/>
            <person name="Chiu R."/>
            <person name="Doering T.L."/>
            <person name="Donlin M.J."/>
            <person name="D'Souza C.A."/>
            <person name="Fox D.S."/>
            <person name="Grinberg V."/>
            <person name="Fu J."/>
            <person name="Fukushima M."/>
            <person name="Haas B.J."/>
            <person name="Huang J.C."/>
            <person name="Janbon G."/>
            <person name="Jones S.J.M."/>
            <person name="Koo H.L."/>
            <person name="Krzywinski M.I."/>
            <person name="Kwon-Chung K.J."/>
            <person name="Lengeler K.B."/>
            <person name="Maiti R."/>
            <person name="Marra M.A."/>
            <person name="Marra R.E."/>
            <person name="Mathewson C.A."/>
            <person name="Mitchell T.G."/>
            <person name="Pertea M."/>
            <person name="Riggs F.R."/>
            <person name="Salzberg S.L."/>
            <person name="Schein J.E."/>
            <person name="Shvartsbeyn A."/>
            <person name="Shin H."/>
            <person name="Shumway M."/>
            <person name="Specht C.A."/>
            <person name="Suh B.B."/>
            <person name="Tenney A."/>
            <person name="Utterback T.R."/>
            <person name="Wickes B.L."/>
            <person name="Wortman J.R."/>
            <person name="Wye N.H."/>
            <person name="Kronstad J.W."/>
            <person name="Lodge J.K."/>
            <person name="Heitman J."/>
            <person name="Davis R.W."/>
            <person name="Fraser C.M."/>
            <person name="Hyman R.W."/>
        </authorList>
    </citation>
    <scope>NUCLEOTIDE SEQUENCE [LARGE SCALE GENOMIC DNA]</scope>
    <source>
        <strain>JEC21 / ATCC MYA-565</strain>
    </source>
</reference>